<keyword id="KW-0238">DNA-binding</keyword>
<keyword id="KW-1185">Reference proteome</keyword>
<keyword id="KW-0731">Sigma factor</keyword>
<keyword id="KW-0804">Transcription</keyword>
<keyword id="KW-0805">Transcription regulation</keyword>
<protein>
    <recommendedName>
        <fullName>ECF RNA polymerase sigma factor SigM</fullName>
        <shortName>ECF sigma factor SigM</shortName>
    </recommendedName>
</protein>
<feature type="chain" id="PRO_0000094014" description="ECF RNA polymerase sigma factor SigM">
    <location>
        <begin position="1"/>
        <end position="163"/>
    </location>
</feature>
<feature type="DNA-binding region" description="H-T-H motif" evidence="1">
    <location>
        <begin position="127"/>
        <end position="146"/>
    </location>
</feature>
<feature type="short sequence motif" description="Polymerase core binding">
    <location>
        <begin position="30"/>
        <end position="43"/>
    </location>
</feature>
<reference key="1">
    <citation type="journal article" date="1998" name="Microbiology">
        <title>The 172 kb prkA-addAB region from 83 degrees to 97 degrees of the Bacillus subtilis chromosome contains several dysfunctional genes, the glyB marker, many genes encoding transporter proteins, and the ubiquitous hit gene.</title>
        <authorList>
            <person name="Noback M.A."/>
            <person name="Holsappel S."/>
            <person name="Kiewiet R."/>
            <person name="Terpstra P."/>
            <person name="Wambutt R."/>
            <person name="Wedler H."/>
            <person name="Venema G."/>
            <person name="Bron S."/>
        </authorList>
    </citation>
    <scope>NUCLEOTIDE SEQUENCE [GENOMIC DNA]</scope>
    <source>
        <strain>168</strain>
    </source>
</reference>
<reference key="2">
    <citation type="journal article" date="1997" name="Nature">
        <title>The complete genome sequence of the Gram-positive bacterium Bacillus subtilis.</title>
        <authorList>
            <person name="Kunst F."/>
            <person name="Ogasawara N."/>
            <person name="Moszer I."/>
            <person name="Albertini A.M."/>
            <person name="Alloni G."/>
            <person name="Azevedo V."/>
            <person name="Bertero M.G."/>
            <person name="Bessieres P."/>
            <person name="Bolotin A."/>
            <person name="Borchert S."/>
            <person name="Borriss R."/>
            <person name="Boursier L."/>
            <person name="Brans A."/>
            <person name="Braun M."/>
            <person name="Brignell S.C."/>
            <person name="Bron S."/>
            <person name="Brouillet S."/>
            <person name="Bruschi C.V."/>
            <person name="Caldwell B."/>
            <person name="Capuano V."/>
            <person name="Carter N.M."/>
            <person name="Choi S.-K."/>
            <person name="Codani J.-J."/>
            <person name="Connerton I.F."/>
            <person name="Cummings N.J."/>
            <person name="Daniel R.A."/>
            <person name="Denizot F."/>
            <person name="Devine K.M."/>
            <person name="Duesterhoeft A."/>
            <person name="Ehrlich S.D."/>
            <person name="Emmerson P.T."/>
            <person name="Entian K.-D."/>
            <person name="Errington J."/>
            <person name="Fabret C."/>
            <person name="Ferrari E."/>
            <person name="Foulger D."/>
            <person name="Fritz C."/>
            <person name="Fujita M."/>
            <person name="Fujita Y."/>
            <person name="Fuma S."/>
            <person name="Galizzi A."/>
            <person name="Galleron N."/>
            <person name="Ghim S.-Y."/>
            <person name="Glaser P."/>
            <person name="Goffeau A."/>
            <person name="Golightly E.J."/>
            <person name="Grandi G."/>
            <person name="Guiseppi G."/>
            <person name="Guy B.J."/>
            <person name="Haga K."/>
            <person name="Haiech J."/>
            <person name="Harwood C.R."/>
            <person name="Henaut A."/>
            <person name="Hilbert H."/>
            <person name="Holsappel S."/>
            <person name="Hosono S."/>
            <person name="Hullo M.-F."/>
            <person name="Itaya M."/>
            <person name="Jones L.-M."/>
            <person name="Joris B."/>
            <person name="Karamata D."/>
            <person name="Kasahara Y."/>
            <person name="Klaerr-Blanchard M."/>
            <person name="Klein C."/>
            <person name="Kobayashi Y."/>
            <person name="Koetter P."/>
            <person name="Koningstein G."/>
            <person name="Krogh S."/>
            <person name="Kumano M."/>
            <person name="Kurita K."/>
            <person name="Lapidus A."/>
            <person name="Lardinois S."/>
            <person name="Lauber J."/>
            <person name="Lazarevic V."/>
            <person name="Lee S.-M."/>
            <person name="Levine A."/>
            <person name="Liu H."/>
            <person name="Masuda S."/>
            <person name="Mauel C."/>
            <person name="Medigue C."/>
            <person name="Medina N."/>
            <person name="Mellado R.P."/>
            <person name="Mizuno M."/>
            <person name="Moestl D."/>
            <person name="Nakai S."/>
            <person name="Noback M."/>
            <person name="Noone D."/>
            <person name="O'Reilly M."/>
            <person name="Ogawa K."/>
            <person name="Ogiwara A."/>
            <person name="Oudega B."/>
            <person name="Park S.-H."/>
            <person name="Parro V."/>
            <person name="Pohl T.M."/>
            <person name="Portetelle D."/>
            <person name="Porwollik S."/>
            <person name="Prescott A.M."/>
            <person name="Presecan E."/>
            <person name="Pujic P."/>
            <person name="Purnelle B."/>
            <person name="Rapoport G."/>
            <person name="Rey M."/>
            <person name="Reynolds S."/>
            <person name="Rieger M."/>
            <person name="Rivolta C."/>
            <person name="Rocha E."/>
            <person name="Roche B."/>
            <person name="Rose M."/>
            <person name="Sadaie Y."/>
            <person name="Sato T."/>
            <person name="Scanlan E."/>
            <person name="Schleich S."/>
            <person name="Schroeter R."/>
            <person name="Scoffone F."/>
            <person name="Sekiguchi J."/>
            <person name="Sekowska A."/>
            <person name="Seror S.J."/>
            <person name="Serror P."/>
            <person name="Shin B.-S."/>
            <person name="Soldo B."/>
            <person name="Sorokin A."/>
            <person name="Tacconi E."/>
            <person name="Takagi T."/>
            <person name="Takahashi H."/>
            <person name="Takemaru K."/>
            <person name="Takeuchi M."/>
            <person name="Tamakoshi A."/>
            <person name="Tanaka T."/>
            <person name="Terpstra P."/>
            <person name="Tognoni A."/>
            <person name="Tosato V."/>
            <person name="Uchiyama S."/>
            <person name="Vandenbol M."/>
            <person name="Vannier F."/>
            <person name="Vassarotti A."/>
            <person name="Viari A."/>
            <person name="Wambutt R."/>
            <person name="Wedler E."/>
            <person name="Wedler H."/>
            <person name="Weitzenegger T."/>
            <person name="Winters P."/>
            <person name="Wipat A."/>
            <person name="Yamamoto H."/>
            <person name="Yamane K."/>
            <person name="Yasumoto K."/>
            <person name="Yata K."/>
            <person name="Yoshida K."/>
            <person name="Yoshikawa H.-F."/>
            <person name="Zumstein E."/>
            <person name="Yoshikawa H."/>
            <person name="Danchin A."/>
        </authorList>
    </citation>
    <scope>NUCLEOTIDE SEQUENCE [LARGE SCALE GENOMIC DNA]</scope>
    <source>
        <strain>168</strain>
    </source>
</reference>
<reference key="3">
    <citation type="journal article" date="1999" name="Mol. Microbiol.">
        <title>Sigma M, an ECF RNA polymerase sigma factor of Bacillus subtilis 168, is essential for growth and survival in high concentrations of salt.</title>
        <authorList>
            <person name="Horsburgh M.J."/>
            <person name="Moir A."/>
        </authorList>
    </citation>
    <scope>INDUCTION</scope>
    <scope>DISRUPTION PHENOTYPE</scope>
    <source>
        <strain>168</strain>
    </source>
</reference>
<reference key="4">
    <citation type="journal article" date="2003" name="J. Bacteriol.">
        <title>SigM, an extracytoplasmic function sigma factor of Bacillus subtilis, is activated in response to cell wall antibiotics, ethanol, heat, acid, and superoxide stress.</title>
        <authorList>
            <person name="Thackray P.D."/>
            <person name="Moir A."/>
        </authorList>
    </citation>
    <scope>PUTATIVE FUNCTION</scope>
    <scope>INDUCTION</scope>
</reference>
<reference key="5">
    <citation type="journal article" date="2004" name="Microbiology">
        <title>Interaction of Bacillus subtilis extracytoplasmic function (ECF) sigma factors with the N-terminal regions of their potential anti-sigma factors.</title>
        <authorList>
            <person name="Yoshimura M."/>
            <person name="Asai K."/>
            <person name="Sadaie Y."/>
            <person name="Yoshikawa H."/>
        </authorList>
    </citation>
    <scope>FUNCTION</scope>
    <scope>INTERACTION WITH YHDL</scope>
</reference>
<reference key="6">
    <citation type="journal article" date="2007" name="J. Bacteriol.">
        <title>SigM-responsive genes of Bacillus subtilis and their promoters.</title>
        <authorList>
            <person name="Jervis A.J."/>
            <person name="Thackray P.D."/>
            <person name="Houston C.W."/>
            <person name="Horsburgh M.J."/>
            <person name="Moir A."/>
        </authorList>
    </citation>
    <scope>FUNCTION</scope>
    <scope>REGULON</scope>
    <source>
        <strain>168 / 1604</strain>
    </source>
</reference>
<reference key="7">
    <citation type="journal article" date="2011" name="Proteomics">
        <title>The dynamic protein partnership of RNA polymerase in Bacillus subtilis.</title>
        <authorList>
            <person name="Delumeau O."/>
            <person name="Lecointe F."/>
            <person name="Muntel J."/>
            <person name="Guillot A."/>
            <person name="Guedon E."/>
            <person name="Monnet V."/>
            <person name="Hecker M."/>
            <person name="Becher D."/>
            <person name="Polard P."/>
            <person name="Noirot P."/>
        </authorList>
    </citation>
    <scope>FUNCTION</scope>
    <scope>SUBUNIT</scope>
    <source>
        <strain>168</strain>
    </source>
</reference>
<reference key="8">
    <citation type="journal article" date="2012" name="Mol. Microbiol.">
        <title>Analysis of the role of Bacillus subtilis sigma(M) in beta-lactam resistance reveals an essential role for c-di-AMP in peptidoglycan homeostasis.</title>
        <authorList>
            <person name="Luo Y."/>
            <person name="Helmann J.D."/>
        </authorList>
    </citation>
    <scope>INDUCTION</scope>
    <scope>DISRUPTION PHENOTYPE</scope>
    <source>
        <strain>168</strain>
    </source>
</reference>
<sequence>MTIDEIYQMYMNDVYRFLLSMTKDKHLAEDLLQETFMRAYIHIHSYDHSKVKPWLFQVARNAFIDYVRKHKKEVTISDDLIGSLFQNAVQSPAHQVEIKEVLTGYMSELPDNYREALTLYYLKELNYKEASHIMNISEANFKSVLFRARQRLKALYNRGVNDE</sequence>
<gene>
    <name type="primary">sigM</name>
    <name type="synonym">yhdM</name>
    <name type="ordered locus">BSU09520</name>
</gene>
<proteinExistence type="evidence at protein level"/>
<accession>O07582</accession>
<accession>Q796X2</accession>
<evidence type="ECO:0000250" key="1"/>
<evidence type="ECO:0000269" key="2">
    <source>
    </source>
</evidence>
<evidence type="ECO:0000269" key="3">
    <source>
    </source>
</evidence>
<evidence type="ECO:0000269" key="4">
    <source>
    </source>
</evidence>
<evidence type="ECO:0000269" key="5">
    <source>
    </source>
</evidence>
<evidence type="ECO:0000269" key="6">
    <source>
    </source>
</evidence>
<evidence type="ECO:0000269" key="7">
    <source>
    </source>
</evidence>
<evidence type="ECO:0000305" key="8"/>
<evidence type="ECO:0000305" key="9">
    <source>
    </source>
</evidence>
<evidence type="ECO:0000305" key="10">
    <source>
    </source>
</evidence>
<comment type="function">
    <text evidence="3 5 6 7 9">Sigma factors are initiation factors that promote the attachment of RNA polymerase (RNAP) to specific initiation sites and are then released. Extracytoplasmic function (ECF) sigma factors are held in an inactive form by a cognate anti-sigma factor (YhdL) until released (PubMed:14993308). This sigma factor is involved in the maintenance of membrane and cell wall integrity in response to environmental stresses including salt, acid, ethanol and antibiotics stress (PubMed:12775685, PubMed:22211522). Partially regulates transcription from a number of genes including disA (PubMed:17434969). Associates with RNAP core under all growth phases (PubMed:21710567).</text>
</comment>
<comment type="subunit">
    <text evidence="4 10">Interacts with the N-terminus of YhdL, which is probably its anti-sigma factor (PubMed:14993308). Interacts transiently with the RNAP core (Probable).</text>
</comment>
<comment type="induction">
    <text evidence="2 3 7">Forms an operon with yhdL and yhdK, maximally expressed during early to mid-exponential growth phases (PubMed:10216858). Transcription decreases during late exponential growth; positively autoregulated (PubMed:10216858). Negatively regulated by yhdL and yhdK (PubMed:10216858). Induced by 5% ethanol, 80 uM paraquat, pH 4.3, the antibiotics, inhibitors of cell wall, bacitracin, vancomycin and phosphomycin, heat shock of 10 minutes at 50 degrees Celsius (PubMed:12775685). No induction was observed with pH 9, H(2)O(2), monensin, and the detergents Triton X-100 and Tween 20 (PubMed:12775685). Induced 3-fold by the beta-lactam antibiotic cefuroxime (PubMed:22211522).</text>
</comment>
<comment type="disruption phenotype">
    <text evidence="2 7">Strains insertionally inactivated in the sigM gene form aberrantly shaped cells that swell and lyse in medium containing high levels of different salts (PubMed:10216858). 70-fold increased sensitivity to the beta-lactam antibiotic cefuroxime (CEF), double sigM-sigX mutants have 130-fold increased sensitivity to CEF (PubMed:22211522). Also sensitive to other antibiotics (PubMed:22211522).</text>
</comment>
<comment type="similarity">
    <text evidence="8">Belongs to the sigma-70 factor family. ECF subfamily.</text>
</comment>
<organism>
    <name type="scientific">Bacillus subtilis (strain 168)</name>
    <dbReference type="NCBI Taxonomy" id="224308"/>
    <lineage>
        <taxon>Bacteria</taxon>
        <taxon>Bacillati</taxon>
        <taxon>Bacillota</taxon>
        <taxon>Bacilli</taxon>
        <taxon>Bacillales</taxon>
        <taxon>Bacillaceae</taxon>
        <taxon>Bacillus</taxon>
    </lineage>
</organism>
<name>SIGM_BACSU</name>
<dbReference type="EMBL" id="Y14082">
    <property type="protein sequence ID" value="CAA74497.1"/>
    <property type="molecule type" value="Genomic_DNA"/>
</dbReference>
<dbReference type="EMBL" id="AL009126">
    <property type="protein sequence ID" value="CAB12791.1"/>
    <property type="molecule type" value="Genomic_DNA"/>
</dbReference>
<dbReference type="PIR" id="C69826">
    <property type="entry name" value="C69826"/>
</dbReference>
<dbReference type="RefSeq" id="NP_388833.1">
    <property type="nucleotide sequence ID" value="NC_000964.3"/>
</dbReference>
<dbReference type="RefSeq" id="WP_003224177.1">
    <property type="nucleotide sequence ID" value="NZ_OZ025638.1"/>
</dbReference>
<dbReference type="SMR" id="O07582"/>
<dbReference type="FunCoup" id="O07582">
    <property type="interactions" value="48"/>
</dbReference>
<dbReference type="IntAct" id="O07582">
    <property type="interactions" value="1"/>
</dbReference>
<dbReference type="STRING" id="224308.BSU09520"/>
<dbReference type="PaxDb" id="224308-BSU09520"/>
<dbReference type="EnsemblBacteria" id="CAB12791">
    <property type="protein sequence ID" value="CAB12791"/>
    <property type="gene ID" value="BSU_09520"/>
</dbReference>
<dbReference type="GeneID" id="76986057"/>
<dbReference type="GeneID" id="936267"/>
<dbReference type="KEGG" id="bsu:BSU09520"/>
<dbReference type="PATRIC" id="fig|224308.179.peg.1025"/>
<dbReference type="eggNOG" id="COG1595">
    <property type="taxonomic scope" value="Bacteria"/>
</dbReference>
<dbReference type="InParanoid" id="O07582"/>
<dbReference type="OrthoDB" id="9795666at2"/>
<dbReference type="PhylomeDB" id="O07582"/>
<dbReference type="BioCyc" id="BSUB:BSU09520-MONOMER"/>
<dbReference type="PRO" id="PR:O07582"/>
<dbReference type="Proteomes" id="UP000001570">
    <property type="component" value="Chromosome"/>
</dbReference>
<dbReference type="GO" id="GO:0003677">
    <property type="term" value="F:DNA binding"/>
    <property type="evidence" value="ECO:0007669"/>
    <property type="project" value="UniProtKB-KW"/>
</dbReference>
<dbReference type="GO" id="GO:0016987">
    <property type="term" value="F:sigma factor activity"/>
    <property type="evidence" value="ECO:0000318"/>
    <property type="project" value="GO_Central"/>
</dbReference>
<dbReference type="GO" id="GO:0006352">
    <property type="term" value="P:DNA-templated transcription initiation"/>
    <property type="evidence" value="ECO:0007669"/>
    <property type="project" value="InterPro"/>
</dbReference>
<dbReference type="GO" id="GO:0006355">
    <property type="term" value="P:regulation of DNA-templated transcription"/>
    <property type="evidence" value="ECO:0000318"/>
    <property type="project" value="GO_Central"/>
</dbReference>
<dbReference type="GO" id="GO:0006950">
    <property type="term" value="P:response to stress"/>
    <property type="evidence" value="ECO:0007669"/>
    <property type="project" value="UniProtKB-ARBA"/>
</dbReference>
<dbReference type="CDD" id="cd06171">
    <property type="entry name" value="Sigma70_r4"/>
    <property type="match status" value="1"/>
</dbReference>
<dbReference type="Gene3D" id="1.10.1740.10">
    <property type="match status" value="1"/>
</dbReference>
<dbReference type="Gene3D" id="1.10.10.10">
    <property type="entry name" value="Winged helix-like DNA-binding domain superfamily/Winged helix DNA-binding domain"/>
    <property type="match status" value="1"/>
</dbReference>
<dbReference type="InterPro" id="IPR039425">
    <property type="entry name" value="RNA_pol_sigma-70-like"/>
</dbReference>
<dbReference type="InterPro" id="IPR014284">
    <property type="entry name" value="RNA_pol_sigma-70_dom"/>
</dbReference>
<dbReference type="InterPro" id="IPR014296">
    <property type="entry name" value="RNA_pol_sigma-M_bacilli"/>
</dbReference>
<dbReference type="InterPro" id="IPR000838">
    <property type="entry name" value="RNA_pol_sigma70_ECF_CS"/>
</dbReference>
<dbReference type="InterPro" id="IPR007627">
    <property type="entry name" value="RNA_pol_sigma70_r2"/>
</dbReference>
<dbReference type="InterPro" id="IPR013249">
    <property type="entry name" value="RNA_pol_sigma70_r4_t2"/>
</dbReference>
<dbReference type="InterPro" id="IPR013325">
    <property type="entry name" value="RNA_pol_sigma_r2"/>
</dbReference>
<dbReference type="InterPro" id="IPR013324">
    <property type="entry name" value="RNA_pol_sigma_r3/r4-like"/>
</dbReference>
<dbReference type="InterPro" id="IPR036388">
    <property type="entry name" value="WH-like_DNA-bd_sf"/>
</dbReference>
<dbReference type="NCBIfam" id="NF007226">
    <property type="entry name" value="PRK09644.1"/>
    <property type="match status" value="1"/>
</dbReference>
<dbReference type="NCBIfam" id="TIGR02950">
    <property type="entry name" value="SigM_subfam"/>
    <property type="match status" value="1"/>
</dbReference>
<dbReference type="NCBIfam" id="TIGR02937">
    <property type="entry name" value="sigma70-ECF"/>
    <property type="match status" value="1"/>
</dbReference>
<dbReference type="PANTHER" id="PTHR43133:SF52">
    <property type="entry name" value="ECF RNA POLYMERASE SIGMA FACTOR SIGL"/>
    <property type="match status" value="1"/>
</dbReference>
<dbReference type="PANTHER" id="PTHR43133">
    <property type="entry name" value="RNA POLYMERASE ECF-TYPE SIGMA FACTO"/>
    <property type="match status" value="1"/>
</dbReference>
<dbReference type="Pfam" id="PF04542">
    <property type="entry name" value="Sigma70_r2"/>
    <property type="match status" value="1"/>
</dbReference>
<dbReference type="Pfam" id="PF08281">
    <property type="entry name" value="Sigma70_r4_2"/>
    <property type="match status" value="1"/>
</dbReference>
<dbReference type="SUPFAM" id="SSF88946">
    <property type="entry name" value="Sigma2 domain of RNA polymerase sigma factors"/>
    <property type="match status" value="1"/>
</dbReference>
<dbReference type="SUPFAM" id="SSF88659">
    <property type="entry name" value="Sigma3 and sigma4 domains of RNA polymerase sigma factors"/>
    <property type="match status" value="1"/>
</dbReference>
<dbReference type="PROSITE" id="PS01063">
    <property type="entry name" value="SIGMA70_ECF"/>
    <property type="match status" value="1"/>
</dbReference>